<dbReference type="EMBL" id="CP000395">
    <property type="protein sequence ID" value="ABH01396.1"/>
    <property type="molecule type" value="Genomic_DNA"/>
</dbReference>
<dbReference type="EMBL" id="CP002933">
    <property type="protein sequence ID" value="AEL69362.1"/>
    <property type="molecule type" value="Genomic_DNA"/>
</dbReference>
<dbReference type="RefSeq" id="WP_011600846.1">
    <property type="nucleotide sequence ID" value="NC_008277.1"/>
</dbReference>
<dbReference type="SMR" id="Q0SP32"/>
<dbReference type="STRING" id="29518.BLA32_03635"/>
<dbReference type="KEGG" id="baf:BAPKO_0133"/>
<dbReference type="KEGG" id="bafz:BafPKo_0129"/>
<dbReference type="PATRIC" id="fig|390236.22.peg.128"/>
<dbReference type="eggNOG" id="COG0468">
    <property type="taxonomic scope" value="Bacteria"/>
</dbReference>
<dbReference type="HOGENOM" id="CLU_040469_3_2_12"/>
<dbReference type="OrthoDB" id="9776733at2"/>
<dbReference type="Proteomes" id="UP000005216">
    <property type="component" value="Chromosome"/>
</dbReference>
<dbReference type="GO" id="GO:0005829">
    <property type="term" value="C:cytosol"/>
    <property type="evidence" value="ECO:0007669"/>
    <property type="project" value="TreeGrafter"/>
</dbReference>
<dbReference type="GO" id="GO:0005524">
    <property type="term" value="F:ATP binding"/>
    <property type="evidence" value="ECO:0007669"/>
    <property type="project" value="UniProtKB-UniRule"/>
</dbReference>
<dbReference type="GO" id="GO:0016887">
    <property type="term" value="F:ATP hydrolysis activity"/>
    <property type="evidence" value="ECO:0007669"/>
    <property type="project" value="InterPro"/>
</dbReference>
<dbReference type="GO" id="GO:0140664">
    <property type="term" value="F:ATP-dependent DNA damage sensor activity"/>
    <property type="evidence" value="ECO:0007669"/>
    <property type="project" value="InterPro"/>
</dbReference>
<dbReference type="GO" id="GO:0003684">
    <property type="term" value="F:damaged DNA binding"/>
    <property type="evidence" value="ECO:0007669"/>
    <property type="project" value="UniProtKB-UniRule"/>
</dbReference>
<dbReference type="GO" id="GO:0003697">
    <property type="term" value="F:single-stranded DNA binding"/>
    <property type="evidence" value="ECO:0007669"/>
    <property type="project" value="UniProtKB-UniRule"/>
</dbReference>
<dbReference type="GO" id="GO:0006310">
    <property type="term" value="P:DNA recombination"/>
    <property type="evidence" value="ECO:0007669"/>
    <property type="project" value="UniProtKB-UniRule"/>
</dbReference>
<dbReference type="GO" id="GO:0006281">
    <property type="term" value="P:DNA repair"/>
    <property type="evidence" value="ECO:0007669"/>
    <property type="project" value="UniProtKB-UniRule"/>
</dbReference>
<dbReference type="GO" id="GO:0009432">
    <property type="term" value="P:SOS response"/>
    <property type="evidence" value="ECO:0007669"/>
    <property type="project" value="UniProtKB-UniRule"/>
</dbReference>
<dbReference type="CDD" id="cd00983">
    <property type="entry name" value="RecA"/>
    <property type="match status" value="1"/>
</dbReference>
<dbReference type="FunFam" id="3.40.50.300:FF:000087">
    <property type="entry name" value="Recombinase RecA"/>
    <property type="match status" value="1"/>
</dbReference>
<dbReference type="Gene3D" id="3.40.50.300">
    <property type="entry name" value="P-loop containing nucleotide triphosphate hydrolases"/>
    <property type="match status" value="1"/>
</dbReference>
<dbReference type="HAMAP" id="MF_00268">
    <property type="entry name" value="RecA"/>
    <property type="match status" value="1"/>
</dbReference>
<dbReference type="InterPro" id="IPR003593">
    <property type="entry name" value="AAA+_ATPase"/>
</dbReference>
<dbReference type="InterPro" id="IPR013765">
    <property type="entry name" value="DNA_recomb/repair_RecA"/>
</dbReference>
<dbReference type="InterPro" id="IPR020584">
    <property type="entry name" value="DNA_recomb/repair_RecA_CS"/>
</dbReference>
<dbReference type="InterPro" id="IPR027417">
    <property type="entry name" value="P-loop_NTPase"/>
</dbReference>
<dbReference type="InterPro" id="IPR049261">
    <property type="entry name" value="RecA-like_C"/>
</dbReference>
<dbReference type="InterPro" id="IPR049428">
    <property type="entry name" value="RecA-like_N"/>
</dbReference>
<dbReference type="InterPro" id="IPR020588">
    <property type="entry name" value="RecA_ATP-bd"/>
</dbReference>
<dbReference type="InterPro" id="IPR023400">
    <property type="entry name" value="RecA_C_sf"/>
</dbReference>
<dbReference type="InterPro" id="IPR020587">
    <property type="entry name" value="RecA_monomer-monomer_interface"/>
</dbReference>
<dbReference type="NCBIfam" id="TIGR02012">
    <property type="entry name" value="tigrfam_recA"/>
    <property type="match status" value="1"/>
</dbReference>
<dbReference type="PANTHER" id="PTHR45900:SF1">
    <property type="entry name" value="MITOCHONDRIAL DNA REPAIR PROTEIN RECA HOMOLOG-RELATED"/>
    <property type="match status" value="1"/>
</dbReference>
<dbReference type="PANTHER" id="PTHR45900">
    <property type="entry name" value="RECA"/>
    <property type="match status" value="1"/>
</dbReference>
<dbReference type="Pfam" id="PF00154">
    <property type="entry name" value="RecA"/>
    <property type="match status" value="1"/>
</dbReference>
<dbReference type="Pfam" id="PF21096">
    <property type="entry name" value="RecA_C"/>
    <property type="match status" value="1"/>
</dbReference>
<dbReference type="PRINTS" id="PR00142">
    <property type="entry name" value="RECA"/>
</dbReference>
<dbReference type="SMART" id="SM00382">
    <property type="entry name" value="AAA"/>
    <property type="match status" value="1"/>
</dbReference>
<dbReference type="SUPFAM" id="SSF52540">
    <property type="entry name" value="P-loop containing nucleoside triphosphate hydrolases"/>
    <property type="match status" value="1"/>
</dbReference>
<dbReference type="SUPFAM" id="SSF54752">
    <property type="entry name" value="RecA protein, C-terminal domain"/>
    <property type="match status" value="1"/>
</dbReference>
<dbReference type="PROSITE" id="PS00321">
    <property type="entry name" value="RECA_1"/>
    <property type="match status" value="1"/>
</dbReference>
<dbReference type="PROSITE" id="PS50162">
    <property type="entry name" value="RECA_2"/>
    <property type="match status" value="1"/>
</dbReference>
<dbReference type="PROSITE" id="PS50163">
    <property type="entry name" value="RECA_3"/>
    <property type="match status" value="1"/>
</dbReference>
<evidence type="ECO:0000255" key="1">
    <source>
        <dbReference type="HAMAP-Rule" id="MF_00268"/>
    </source>
</evidence>
<name>RECA_BORAP</name>
<organism>
    <name type="scientific">Borreliella afzelii (strain PKo)</name>
    <name type="common">Borrelia afzelii</name>
    <dbReference type="NCBI Taxonomy" id="390236"/>
    <lineage>
        <taxon>Bacteria</taxon>
        <taxon>Pseudomonadati</taxon>
        <taxon>Spirochaetota</taxon>
        <taxon>Spirochaetia</taxon>
        <taxon>Spirochaetales</taxon>
        <taxon>Borreliaceae</taxon>
        <taxon>Borreliella</taxon>
    </lineage>
</organism>
<accession>Q0SP32</accession>
<accession>G0IQX6</accession>
<feature type="chain" id="PRO_1000047892" description="Protein RecA">
    <location>
        <begin position="1"/>
        <end position="365"/>
    </location>
</feature>
<feature type="binding site" evidence="1">
    <location>
        <begin position="81"/>
        <end position="88"/>
    </location>
    <ligand>
        <name>ATP</name>
        <dbReference type="ChEBI" id="CHEBI:30616"/>
    </ligand>
</feature>
<sequence length="365" mass="39981">MSKLKEKREKVAVSIERSSKEEAVELARVQIEKTFGKGSLIKMGESPVGKGIKSISSGSIVLDEALGIGGYPRGRIIEIFGPESSGKTTLTLQAIAEVQKEGGIAAFIDAEHALDPVYAKALGVNVAELWLSQPDTGEQALEIAEHLIRSGGIDLIVVDSVAALTPKLEIDGEMGDSQIGLQARLMSKALRKITGILSKSNTCIMFINQIRMRIGIMFGNPETTTGGNALKFYASLRLEVRKVEQITRSGSSDDVIGNKIRVKIVKNKVAPPFRKVELVIYFGKGISREAGILDAAIKHNLIQKTGSWYSLGDNKLGQGRESVIEYLSKEVELTNDLDKRLRKVIFNNFDQEDVSFIEYKENESE</sequence>
<reference key="1">
    <citation type="journal article" date="2006" name="BMC Genomics">
        <title>Comparative genome analysis: selection pressure on the Borrelia vls cassettes is essential for infectivity.</title>
        <authorList>
            <person name="Gloeckner G."/>
            <person name="Schulte-Spechtel U."/>
            <person name="Schilhabel M."/>
            <person name="Felder M."/>
            <person name="Suehnel J."/>
            <person name="Wilske B."/>
            <person name="Platzer M."/>
        </authorList>
    </citation>
    <scope>NUCLEOTIDE SEQUENCE [LARGE SCALE GENOMIC DNA]</scope>
    <source>
        <strain>PKo</strain>
    </source>
</reference>
<reference key="2">
    <citation type="journal article" date="2011" name="J. Bacteriol.">
        <title>Whole-genome sequences of two Borrelia afzelii and two Borrelia garinii Lyme disease agent isolates.</title>
        <authorList>
            <person name="Casjens S.R."/>
            <person name="Mongodin E.F."/>
            <person name="Qiu W.G."/>
            <person name="Dunn J.J."/>
            <person name="Luft B.J."/>
            <person name="Fraser-Liggett C.M."/>
            <person name="Schutzer S.E."/>
        </authorList>
    </citation>
    <scope>NUCLEOTIDE SEQUENCE [LARGE SCALE GENOMIC DNA]</scope>
    <source>
        <strain>PKo</strain>
    </source>
</reference>
<gene>
    <name evidence="1" type="primary">recA</name>
    <name type="ordered locus">BAPKO_0133</name>
    <name type="ordered locus">BafPKo_0129</name>
</gene>
<protein>
    <recommendedName>
        <fullName evidence="1">Protein RecA</fullName>
    </recommendedName>
    <alternativeName>
        <fullName evidence="1">Recombinase A</fullName>
    </alternativeName>
</protein>
<keyword id="KW-0067">ATP-binding</keyword>
<keyword id="KW-0963">Cytoplasm</keyword>
<keyword id="KW-0227">DNA damage</keyword>
<keyword id="KW-0233">DNA recombination</keyword>
<keyword id="KW-0234">DNA repair</keyword>
<keyword id="KW-0238">DNA-binding</keyword>
<keyword id="KW-0547">Nucleotide-binding</keyword>
<keyword id="KW-0742">SOS response</keyword>
<proteinExistence type="inferred from homology"/>
<comment type="function">
    <text evidence="1">Can catalyze the hydrolysis of ATP in the presence of single-stranded DNA, the ATP-dependent uptake of single-stranded DNA by duplex DNA, and the ATP-dependent hybridization of homologous single-stranded DNAs. It interacts with LexA causing its activation and leading to its autocatalytic cleavage.</text>
</comment>
<comment type="subcellular location">
    <subcellularLocation>
        <location evidence="1">Cytoplasm</location>
    </subcellularLocation>
</comment>
<comment type="similarity">
    <text evidence="1">Belongs to the RecA family.</text>
</comment>